<gene>
    <name evidence="1" type="primary">TOR</name>
</gene>
<dbReference type="EMBL" id="AY814912">
    <property type="protein sequence ID" value="AAW26644.1"/>
    <property type="molecule type" value="mRNA"/>
</dbReference>
<dbReference type="OrthoDB" id="10002163at2759"/>
<dbReference type="GO" id="GO:0005765">
    <property type="term" value="C:lysosomal membrane"/>
    <property type="evidence" value="ECO:0007669"/>
    <property type="project" value="TreeGrafter"/>
</dbReference>
<dbReference type="GO" id="GO:0005886">
    <property type="term" value="C:plasma membrane"/>
    <property type="evidence" value="ECO:0007669"/>
    <property type="project" value="UniProtKB-SubCell"/>
</dbReference>
<dbReference type="InterPro" id="IPR051115">
    <property type="entry name" value="LAPTM_transporter"/>
</dbReference>
<dbReference type="PANTHER" id="PTHR12479">
    <property type="entry name" value="LYSOSOMAL-ASSOCIATED TRANSMEMBRANE PROTEIN"/>
    <property type="match status" value="1"/>
</dbReference>
<dbReference type="PANTHER" id="PTHR12479:SF10">
    <property type="entry name" value="LYSOSOMAL-ASSOCIATED TRANSMEMBRANE PROTEIN"/>
    <property type="match status" value="1"/>
</dbReference>
<organism>
    <name type="scientific">Schistosoma japonicum</name>
    <name type="common">Blood fluke</name>
    <dbReference type="NCBI Taxonomy" id="6182"/>
    <lineage>
        <taxon>Eukaryota</taxon>
        <taxon>Metazoa</taxon>
        <taxon>Spiralia</taxon>
        <taxon>Lophotrochozoa</taxon>
        <taxon>Platyhelminthes</taxon>
        <taxon>Trematoda</taxon>
        <taxon>Digenea</taxon>
        <taxon>Strigeidida</taxon>
        <taxon>Schistosomatoidea</taxon>
        <taxon>Schistosomatidae</taxon>
        <taxon>Schistosoma</taxon>
    </lineage>
</organism>
<keyword id="KW-1003">Cell membrane</keyword>
<keyword id="KW-0472">Membrane</keyword>
<keyword id="KW-0597">Phosphoprotein</keyword>
<keyword id="KW-0675">Receptor</keyword>
<keyword id="KW-0812">Transmembrane</keyword>
<keyword id="KW-1133">Transmembrane helix</keyword>
<evidence type="ECO:0000250" key="1">
    <source>
        <dbReference type="UniProtKB" id="C4QM85"/>
    </source>
</evidence>
<evidence type="ECO:0000250" key="2">
    <source>
        <dbReference type="UniProtKB" id="Q5J7P3"/>
    </source>
</evidence>
<evidence type="ECO:0000250" key="3">
    <source>
        <dbReference type="UniProtKB" id="Q9BLM6"/>
    </source>
</evidence>
<evidence type="ECO:0000255" key="4"/>
<evidence type="ECO:0000256" key="5">
    <source>
        <dbReference type="SAM" id="MobiDB-lite"/>
    </source>
</evidence>
<evidence type="ECO:0000269" key="6">
    <source>
    </source>
</evidence>
<evidence type="ECO:0000303" key="7">
    <source>
    </source>
</evidence>
<evidence type="ECO:0000305" key="8"/>
<evidence type="ECO:0000312" key="9">
    <source>
        <dbReference type="EMBL" id="AAW26644.1"/>
    </source>
</evidence>
<comment type="function">
    <text evidence="2 3">Cell surface receptor that binds to human complement C2a protein. This results in inhibition of the classical and lectin pathways of complement activation, probably due to interference with binding of C2a to C4b and interference with cleavage by C1 or MASP2 such that C3 convertase cannot be formed. This infers resistance to complement-mediated cell lysis, allowing parasite survival and infection (By similarity).</text>
</comment>
<comment type="subunit">
    <text evidence="3">Interacts (via N-terminal extracellular domain) with human C2a.</text>
</comment>
<comment type="subcellular location">
    <subcellularLocation>
        <location evidence="3">Cell membrane</location>
        <topology evidence="3">Multi-pass membrane protein</topology>
    </subcellularLocation>
</comment>
<comment type="developmental stage">
    <text evidence="6">Highly expressed in parasitic larvae (cercariae).</text>
</comment>
<comment type="PTM">
    <text evidence="3">Phosphorylated on tyrosine residues.</text>
</comment>
<comment type="miscellaneous">
    <text evidence="3">Potential vaccine candidate molecule.</text>
</comment>
<proteinExistence type="evidence at transcript level"/>
<reference evidence="8 9" key="1">
    <citation type="journal article" date="2006" name="PLoS Pathog.">
        <title>New perspectives on host-parasite interplay by comparative transcriptomic and proteomic analyses of Schistosoma japonicum.</title>
        <authorList>
            <person name="Liu F."/>
            <person name="Lu J."/>
            <person name="Hu W."/>
            <person name="Wang S.-Y."/>
            <person name="Cui S.-J."/>
            <person name="Chi M."/>
            <person name="Yan Q."/>
            <person name="Wang X.-R."/>
            <person name="Song H.-D."/>
            <person name="Xu X.-N."/>
            <person name="Wang J.-J."/>
            <person name="Zhang X.-L."/>
            <person name="Zhang X."/>
            <person name="Wang Z.-Q."/>
            <person name="Xue C.-L."/>
            <person name="Brindley P.J."/>
            <person name="McManus D.P."/>
            <person name="Yang P.-Y."/>
            <person name="Feng Z."/>
            <person name="Chen Z."/>
            <person name="Han Z.-G."/>
        </authorList>
    </citation>
    <scope>NUCLEOTIDE SEQUENCE [MRNA]</scope>
    <scope>DEVELOPMENTAL STAGE</scope>
</reference>
<feature type="chain" id="PRO_0000412759" description="Tetraspanning orphan receptor">
    <location>
        <begin position="1"/>
        <end position="414"/>
    </location>
</feature>
<feature type="topological domain" description="Cytoplasmic" evidence="4">
    <location>
        <begin position="1"/>
        <end position="28"/>
    </location>
</feature>
<feature type="transmembrane region" description="Helical" evidence="4">
    <location>
        <begin position="29"/>
        <end position="49"/>
    </location>
</feature>
<feature type="topological domain" description="Extracellular" evidence="4">
    <location>
        <begin position="50"/>
        <end position="166"/>
    </location>
</feature>
<feature type="transmembrane region" description="Helical" evidence="4">
    <location>
        <begin position="167"/>
        <end position="187"/>
    </location>
</feature>
<feature type="topological domain" description="Cytoplasmic" evidence="4">
    <location>
        <begin position="188"/>
        <end position="194"/>
    </location>
</feature>
<feature type="transmembrane region" description="Helical" evidence="4">
    <location>
        <begin position="195"/>
        <end position="215"/>
    </location>
</feature>
<feature type="topological domain" description="Extracellular" evidence="4">
    <location>
        <begin position="216"/>
        <end position="241"/>
    </location>
</feature>
<feature type="transmembrane region" description="Helical" evidence="4">
    <location>
        <begin position="242"/>
        <end position="262"/>
    </location>
</feature>
<feature type="topological domain" description="Cytoplasmic" evidence="4">
    <location>
        <begin position="263"/>
        <end position="414"/>
    </location>
</feature>
<feature type="region of interest" description="Disordered" evidence="5">
    <location>
        <begin position="306"/>
        <end position="328"/>
    </location>
</feature>
<accession>Q5DC12</accession>
<protein>
    <recommendedName>
        <fullName evidence="1">Tetraspanning orphan receptor</fullName>
    </recommendedName>
    <alternativeName>
        <fullName evidence="1">Complement C2 receptor inhibitor tetraspanning</fullName>
    </alternativeName>
    <alternativeName>
        <fullName evidence="1">Complement C2 receptor inhibitor trispanning</fullName>
    </alternativeName>
    <alternativeName>
        <fullName evidence="7">Trispanning orphan receptor</fullName>
    </alternativeName>
</protein>
<name>TOR_SCHJA</name>
<sequence length="414" mass="46480">MPRASALLTSDPRHQFTCCLCLHVRTGTIIFGITQIIIQLIFISFLFLMTFNPRLFPEDNHGSLDSSQANARYYVLSALFRLVPAVSDIHESLTFPSFPEVRNVNDNKLLFGHNSESEVNFNFDISSGYKDSVPIDMSHSPSRLMSETHKRERGSREIKIRQFSPYIAVCVTTFSLAFCCFMVHGAITRQPTHLLPFFFIQVFDLIICLIHILGFMSSTSDIRLMIHTKTGPIYIKSTGLAFIILSISCMMLAFKAYCLGMVWDCYKYLMLNRRNNVLNEWYSDQWGHFSTFWSLLRAGRNRGNNLTGNLDSANESNTRAHPDPVTYDPSNDLPKYDDILKIPANAYAPPPYYCSNINGNGNLTQANAVTANTTSTNVSTFTTTTTTANTTTNVTSANKNDAEVTSTPSNVHPC</sequence>